<evidence type="ECO:0000250" key="1">
    <source>
        <dbReference type="UniProtKB" id="P54997"/>
    </source>
</evidence>
<evidence type="ECO:0000269" key="2">
    <source>
    </source>
</evidence>
<evidence type="ECO:0000269" key="3">
    <source>
    </source>
</evidence>
<evidence type="ECO:0000269" key="4">
    <source>
    </source>
</evidence>
<evidence type="ECO:0000303" key="5">
    <source>
    </source>
</evidence>
<evidence type="ECO:0000305" key="6"/>
<evidence type="ECO:0000305" key="7">
    <source>
    </source>
</evidence>
<protein>
    <recommendedName>
        <fullName evidence="6">2'-hydroxybiphenyl-2-sulfinate desulfinase</fullName>
        <ecNumber evidence="1 7">3.13.1.3</ecNumber>
    </recommendedName>
    <alternativeName>
        <fullName evidence="7">2-(2-hydroxyphenyl)benzenesulfinate desulfinase</fullName>
        <shortName evidence="7">HPBS desulfinase</shortName>
    </alternativeName>
</protein>
<organism>
    <name type="scientific">Rhodococcus erythropolis</name>
    <name type="common">Arthrobacter picolinophilus</name>
    <dbReference type="NCBI Taxonomy" id="1833"/>
    <lineage>
        <taxon>Bacteria</taxon>
        <taxon>Bacillati</taxon>
        <taxon>Actinomycetota</taxon>
        <taxon>Actinomycetes</taxon>
        <taxon>Mycobacteriales</taxon>
        <taxon>Nocardiaceae</taxon>
        <taxon>Rhodococcus</taxon>
        <taxon>Rhodococcus erythropolis group</taxon>
    </lineage>
</organism>
<sequence length="365" mass="39045">MTSRVDPANPGSELDSAIRDTLTYSNCPVPNALLTASESGFLDAAGIELDVLSGQQGTVHFTYDQPAYTRFGGEIPPLLSEGLRAPGRTRLLGITPLLGRQGFFVRDDSPITAAADLAGRRIGVSASAIRILRGQLGDYLELDPWRQTLVALGSWEARALLHTLEHGELGVDDVELVPISSPGVDVPAEQLEESATVKGADLFPDVARGQAAVLASGDVDALYSWLPWAGELQATGARPVVDLGLDERNAYASVWTVSSGLVRQRPGLVQRLVDAAVDAGLWARDHSDAVTSLHAANLGVSTGAVGQGFGADFQQRLVPRLDHDALALLERTQQFLLTNNLLQEPVALDQWAAPEFLNNSLNRHR</sequence>
<reference key="1">
    <citation type="journal article" date="2006" name="Biotechnol. Lett.">
        <title>Desulfurization of dibenzothiophene by Bacillus subtilis recombinants carrying dszABC and dszD genes.</title>
        <authorList>
            <person name="Ma T."/>
            <person name="Li G."/>
            <person name="Li J."/>
            <person name="Liang F."/>
            <person name="Liu R."/>
        </authorList>
    </citation>
    <scope>NUCLEOTIDE SEQUENCE [GENOMIC DNA]</scope>
    <scope>PROBABLE FUNCTION</scope>
    <scope>PATHWAY</scope>
    <scope>EXPRESSION IN B.SUBTILIS</scope>
    <scope>INDUCTION</scope>
    <scope>BIOTECHNOLOGY</scope>
    <source>
        <strain>DS-3</strain>
    </source>
</reference>
<reference key="2">
    <citation type="journal article" date="2007" name="Biosci. Biotechnol. Biochem.">
        <title>Improvement of dibenzothiophene desulfurization activity by removing the gene overlap in the dsz operon.</title>
        <authorList>
            <person name="Li G.Q."/>
            <person name="Ma T."/>
            <person name="Li S.S."/>
            <person name="Li H."/>
            <person name="Liang F.L."/>
            <person name="Liu R.L."/>
        </authorList>
    </citation>
    <scope>INDUCTION</scope>
    <scope>BIOTECHNOLOGY</scope>
    <source>
        <strain>DS-3</strain>
    </source>
</reference>
<reference key="3">
    <citation type="journal article" date="2008" name="Appl. Environ. Microbiol.">
        <title>Genetic rearrangement strategy for optimizing the dibenzothiophene biodesulfurization pathway in Rhodococcus erythropolis.</title>
        <authorList>
            <person name="Li G.Q."/>
            <person name="Li S.S."/>
            <person name="Zhang M.L."/>
            <person name="Wang J."/>
            <person name="Zhu L."/>
            <person name="Liang F.L."/>
            <person name="Liu R.L."/>
            <person name="Ma T."/>
        </authorList>
    </citation>
    <scope>BIOTECHNOLOGY</scope>
    <source>
        <strain>DS-3</strain>
    </source>
</reference>
<dbReference type="EC" id="3.13.1.3" evidence="1 7"/>
<dbReference type="EMBL" id="DQ444325">
    <property type="protein sequence ID" value="ABE26645.1"/>
    <property type="molecule type" value="Genomic_DNA"/>
</dbReference>
<dbReference type="RefSeq" id="WP_019750079.1">
    <property type="nucleotide sequence ID" value="NZ_CP176577.1"/>
</dbReference>
<dbReference type="SMR" id="P0DW79"/>
<dbReference type="UniPathway" id="UPA00346"/>
<dbReference type="GO" id="GO:0005737">
    <property type="term" value="C:cytoplasm"/>
    <property type="evidence" value="ECO:0007669"/>
    <property type="project" value="UniProtKB-SubCell"/>
</dbReference>
<dbReference type="GO" id="GO:0016787">
    <property type="term" value="F:hydrolase activity"/>
    <property type="evidence" value="ECO:0007669"/>
    <property type="project" value="UniProtKB-KW"/>
</dbReference>
<dbReference type="GO" id="GO:0004497">
    <property type="term" value="F:monooxygenase activity"/>
    <property type="evidence" value="ECO:0007669"/>
    <property type="project" value="UniProtKB-KW"/>
</dbReference>
<dbReference type="GO" id="GO:0018896">
    <property type="term" value="P:dibenzothiophene catabolic process"/>
    <property type="evidence" value="ECO:0007669"/>
    <property type="project" value="UniProtKB-UniPathway"/>
</dbReference>
<dbReference type="CDD" id="cd13554">
    <property type="entry name" value="PBP2_DszB"/>
    <property type="match status" value="1"/>
</dbReference>
<dbReference type="Gene3D" id="3.40.190.270">
    <property type="match status" value="1"/>
</dbReference>
<dbReference type="Gene3D" id="3.40.190.10">
    <property type="entry name" value="Periplasmic binding protein-like II"/>
    <property type="match status" value="1"/>
</dbReference>
<dbReference type="SUPFAM" id="SSF53850">
    <property type="entry name" value="Periplasmic binding protein-like II"/>
    <property type="match status" value="1"/>
</dbReference>
<feature type="chain" id="PRO_0000455394" description="2'-hydroxybiphenyl-2-sulfinate desulfinase">
    <location>
        <begin position="1"/>
        <end position="365"/>
    </location>
</feature>
<feature type="active site" evidence="1">
    <location>
        <position position="27"/>
    </location>
</feature>
<feature type="active site" evidence="1">
    <location>
        <position position="70"/>
    </location>
</feature>
<feature type="binding site" evidence="1">
    <location>
        <position position="27"/>
    </location>
    <ligand>
        <name>2'-hydroxybiphenyl-2-sulfinate</name>
        <dbReference type="ChEBI" id="CHEBI:18218"/>
    </ligand>
</feature>
<feature type="binding site" evidence="1">
    <location>
        <position position="60"/>
    </location>
    <ligand>
        <name>2'-hydroxybiphenyl-2-sulfinate</name>
        <dbReference type="ChEBI" id="CHEBI:18218"/>
    </ligand>
</feature>
<feature type="binding site" evidence="1">
    <location>
        <position position="70"/>
    </location>
    <ligand>
        <name>2'-hydroxybiphenyl-2-sulfinate</name>
        <dbReference type="ChEBI" id="CHEBI:18218"/>
    </ligand>
</feature>
<feature type="site" description="May orient the sulfinate group" evidence="1">
    <location>
        <position position="60"/>
    </location>
</feature>
<keyword id="KW-0963">Cytoplasm</keyword>
<keyword id="KW-0378">Hydrolase</keyword>
<keyword id="KW-0503">Monooxygenase</keyword>
<keyword id="KW-0560">Oxidoreductase</keyword>
<proteinExistence type="evidence at protein level"/>
<gene>
    <name evidence="5" type="primary">dszB</name>
</gene>
<comment type="function">
    <text evidence="1 7">Catalyzes the third and final step of the '4S' desulfurization pathway that removes covalently bound sulfur from dibenzothiophene (DBT) without breaking carbon-carbon bonds. Oxidizes 2-(2'-hydroxyphenyl)benzene sulphinate (HBPS) to 2-hydroxybiphenyl (HBP) plus sulfite. The rate-limiting step of the '4S' desulfurization pathway.</text>
</comment>
<comment type="catalytic activity">
    <reaction evidence="1 7">
        <text>2'-hydroxybiphenyl-2-sulfinate + H2O = biphenyl-2-ol + sulfite + H(+)</text>
        <dbReference type="Rhea" id="RHEA:12945"/>
        <dbReference type="ChEBI" id="CHEBI:15377"/>
        <dbReference type="ChEBI" id="CHEBI:15378"/>
        <dbReference type="ChEBI" id="CHEBI:17043"/>
        <dbReference type="ChEBI" id="CHEBI:17359"/>
        <dbReference type="ChEBI" id="CHEBI:18218"/>
        <dbReference type="EC" id="3.13.1.3"/>
    </reaction>
</comment>
<comment type="pathway">
    <text evidence="2">Sulfur metabolism; dibenzothiophene degradation.</text>
</comment>
<comment type="subunit">
    <text evidence="1">Monomer.</text>
</comment>
<comment type="subcellular location">
    <subcellularLocation>
        <location evidence="1">Cytoplasm</location>
    </subcellularLocation>
</comment>
<comment type="induction">
    <text evidence="3 7">Repressed by HBP or sulfate (Probable). Part of the dszA-dszB-dszC operon. This protein is expressed at quite low levels in R.erythropolis (at protein level) (PubMed:17420595).</text>
</comment>
<comment type="biotechnology">
    <text evidence="2 3 4">Expression in B.subtilis confers the ability to remove sulfur from polycyclic aromatic sulfur compounds found in gasoline and diesel (biodesulfurization), which are a considerable source of pollution (PubMed:16810451). Modification of the operon so the start codon of dszB no longer overlaps with the stop codon of dszA leads to increased expression of DszB (in R.erythropolis) and about 5-fold higher levels of desulfurization of DBT (PubMed:17420595). Rearrangement of the operon into the order dszB-dszC-dszA leads to 12-fold higher levels of DBT desulfurization (PubMed:18165370).</text>
</comment>
<comment type="similarity">
    <text evidence="6">Belongs to the DszB desulfinase family.</text>
</comment>
<name>DSZB_RHOER</name>
<accession>P0DW79</accession>